<feature type="chain" id="PRO_1000118862" description="4-hydroxy-tetrahydrodipicolinate reductase">
    <location>
        <begin position="1"/>
        <end position="272"/>
    </location>
</feature>
<feature type="active site" description="Proton donor/acceptor" evidence="1">
    <location>
        <position position="160"/>
    </location>
</feature>
<feature type="active site" description="Proton donor" evidence="1">
    <location>
        <position position="164"/>
    </location>
</feature>
<feature type="binding site" evidence="1">
    <location>
        <begin position="12"/>
        <end position="17"/>
    </location>
    <ligand>
        <name>NAD(+)</name>
        <dbReference type="ChEBI" id="CHEBI:57540"/>
    </ligand>
</feature>
<feature type="binding site" evidence="1">
    <location>
        <position position="38"/>
    </location>
    <ligand>
        <name>NAD(+)</name>
        <dbReference type="ChEBI" id="CHEBI:57540"/>
    </ligand>
</feature>
<feature type="binding site" evidence="1">
    <location>
        <position position="39"/>
    </location>
    <ligand>
        <name>NADP(+)</name>
        <dbReference type="ChEBI" id="CHEBI:58349"/>
    </ligand>
</feature>
<feature type="binding site" evidence="1">
    <location>
        <begin position="102"/>
        <end position="104"/>
    </location>
    <ligand>
        <name>NAD(+)</name>
        <dbReference type="ChEBI" id="CHEBI:57540"/>
    </ligand>
</feature>
<feature type="binding site" evidence="1">
    <location>
        <begin position="126"/>
        <end position="129"/>
    </location>
    <ligand>
        <name>NAD(+)</name>
        <dbReference type="ChEBI" id="CHEBI:57540"/>
    </ligand>
</feature>
<feature type="binding site" evidence="1">
    <location>
        <position position="161"/>
    </location>
    <ligand>
        <name>(S)-2,3,4,5-tetrahydrodipicolinate</name>
        <dbReference type="ChEBI" id="CHEBI:16845"/>
    </ligand>
</feature>
<feature type="binding site" evidence="1">
    <location>
        <begin position="170"/>
        <end position="171"/>
    </location>
    <ligand>
        <name>(S)-2,3,4,5-tetrahydrodipicolinate</name>
        <dbReference type="ChEBI" id="CHEBI:16845"/>
    </ligand>
</feature>
<sequence>MSETDMKLVVVGAAGRMGQTLIRTVHEAAGVRLHAAIERSNSPFIGRDAGELAGLGPIGVPITDKPLEAFVEAEGVLDFTAPAGTVEFAGLAAQARIVHVIGTTGCSADDEAKIRAAARHARVVKSGNMSLGVNLLGVLTETAARALSAKDWDIEILEMHHRHKVDAPSGTALLLGEAAAKGRGIDLADQAVKVRDGHTGPRPQGTIGFATLRGGLVVGEHSVILAGEGELVTLSHSATDRSIFARGAVAAALWGRSQKPGFYTMLDVLGLN</sequence>
<gene>
    <name evidence="1" type="primary">dapB</name>
    <name type="ordered locus">NGR_c34880</name>
</gene>
<evidence type="ECO:0000255" key="1">
    <source>
        <dbReference type="HAMAP-Rule" id="MF_00102"/>
    </source>
</evidence>
<evidence type="ECO:0000305" key="2"/>
<keyword id="KW-0028">Amino-acid biosynthesis</keyword>
<keyword id="KW-0963">Cytoplasm</keyword>
<keyword id="KW-0220">Diaminopimelate biosynthesis</keyword>
<keyword id="KW-0457">Lysine biosynthesis</keyword>
<keyword id="KW-0520">NAD</keyword>
<keyword id="KW-0521">NADP</keyword>
<keyword id="KW-0560">Oxidoreductase</keyword>
<keyword id="KW-1185">Reference proteome</keyword>
<proteinExistence type="inferred from homology"/>
<organism>
    <name type="scientific">Sinorhizobium fredii (strain NBRC 101917 / NGR234)</name>
    <dbReference type="NCBI Taxonomy" id="394"/>
    <lineage>
        <taxon>Bacteria</taxon>
        <taxon>Pseudomonadati</taxon>
        <taxon>Pseudomonadota</taxon>
        <taxon>Alphaproteobacteria</taxon>
        <taxon>Hyphomicrobiales</taxon>
        <taxon>Rhizobiaceae</taxon>
        <taxon>Sinorhizobium/Ensifer group</taxon>
        <taxon>Sinorhizobium</taxon>
    </lineage>
</organism>
<accession>C3MBY7</accession>
<reference key="1">
    <citation type="journal article" date="2009" name="Appl. Environ. Microbiol.">
        <title>Rhizobium sp. strain NGR234 possesses a remarkable number of secretion systems.</title>
        <authorList>
            <person name="Schmeisser C."/>
            <person name="Liesegang H."/>
            <person name="Krysciak D."/>
            <person name="Bakkou N."/>
            <person name="Le Quere A."/>
            <person name="Wollherr A."/>
            <person name="Heinemeyer I."/>
            <person name="Morgenstern B."/>
            <person name="Pommerening-Roeser A."/>
            <person name="Flores M."/>
            <person name="Palacios R."/>
            <person name="Brenner S."/>
            <person name="Gottschalk G."/>
            <person name="Schmitz R.A."/>
            <person name="Broughton W.J."/>
            <person name="Perret X."/>
            <person name="Strittmatter A.W."/>
            <person name="Streit W.R."/>
        </authorList>
    </citation>
    <scope>NUCLEOTIDE SEQUENCE [LARGE SCALE GENOMIC DNA]</scope>
    <source>
        <strain>NBRC 101917 / NGR234</strain>
    </source>
</reference>
<comment type="function">
    <text evidence="1">Catalyzes the conversion of 4-hydroxy-tetrahydrodipicolinate (HTPA) to tetrahydrodipicolinate.</text>
</comment>
<comment type="catalytic activity">
    <reaction evidence="1">
        <text>(S)-2,3,4,5-tetrahydrodipicolinate + NAD(+) + H2O = (2S,4S)-4-hydroxy-2,3,4,5-tetrahydrodipicolinate + NADH + H(+)</text>
        <dbReference type="Rhea" id="RHEA:35323"/>
        <dbReference type="ChEBI" id="CHEBI:15377"/>
        <dbReference type="ChEBI" id="CHEBI:15378"/>
        <dbReference type="ChEBI" id="CHEBI:16845"/>
        <dbReference type="ChEBI" id="CHEBI:57540"/>
        <dbReference type="ChEBI" id="CHEBI:57945"/>
        <dbReference type="ChEBI" id="CHEBI:67139"/>
        <dbReference type="EC" id="1.17.1.8"/>
    </reaction>
</comment>
<comment type="catalytic activity">
    <reaction evidence="1">
        <text>(S)-2,3,4,5-tetrahydrodipicolinate + NADP(+) + H2O = (2S,4S)-4-hydroxy-2,3,4,5-tetrahydrodipicolinate + NADPH + H(+)</text>
        <dbReference type="Rhea" id="RHEA:35331"/>
        <dbReference type="ChEBI" id="CHEBI:15377"/>
        <dbReference type="ChEBI" id="CHEBI:15378"/>
        <dbReference type="ChEBI" id="CHEBI:16845"/>
        <dbReference type="ChEBI" id="CHEBI:57783"/>
        <dbReference type="ChEBI" id="CHEBI:58349"/>
        <dbReference type="ChEBI" id="CHEBI:67139"/>
        <dbReference type="EC" id="1.17.1.8"/>
    </reaction>
</comment>
<comment type="pathway">
    <text evidence="1">Amino-acid biosynthesis; L-lysine biosynthesis via DAP pathway; (S)-tetrahydrodipicolinate from L-aspartate: step 4/4.</text>
</comment>
<comment type="subcellular location">
    <subcellularLocation>
        <location evidence="1">Cytoplasm</location>
    </subcellularLocation>
</comment>
<comment type="similarity">
    <text evidence="1">Belongs to the DapB family.</text>
</comment>
<comment type="caution">
    <text evidence="2">Was originally thought to be a dihydrodipicolinate reductase (DHDPR), catalyzing the conversion of dihydrodipicolinate to tetrahydrodipicolinate. However, it was shown in E.coli that the substrate of the enzymatic reaction is not dihydrodipicolinate (DHDP) but in fact (2S,4S)-4-hydroxy-2,3,4,5-tetrahydrodipicolinic acid (HTPA), the product released by the DapA-catalyzed reaction.</text>
</comment>
<dbReference type="EC" id="1.17.1.8" evidence="1"/>
<dbReference type="EMBL" id="CP001389">
    <property type="protein sequence ID" value="ACP27212.1"/>
    <property type="molecule type" value="Genomic_DNA"/>
</dbReference>
<dbReference type="RefSeq" id="WP_012709958.1">
    <property type="nucleotide sequence ID" value="NC_012587.1"/>
</dbReference>
<dbReference type="RefSeq" id="YP_002827965.1">
    <property type="nucleotide sequence ID" value="NC_012587.1"/>
</dbReference>
<dbReference type="SMR" id="C3MBY7"/>
<dbReference type="STRING" id="394.NGR_c34880"/>
<dbReference type="KEGG" id="rhi:NGR_c34880"/>
<dbReference type="PATRIC" id="fig|394.7.peg.6336"/>
<dbReference type="eggNOG" id="COG0289">
    <property type="taxonomic scope" value="Bacteria"/>
</dbReference>
<dbReference type="HOGENOM" id="CLU_047479_2_1_5"/>
<dbReference type="OrthoDB" id="9790352at2"/>
<dbReference type="UniPathway" id="UPA00034">
    <property type="reaction ID" value="UER00018"/>
</dbReference>
<dbReference type="Proteomes" id="UP000001054">
    <property type="component" value="Chromosome"/>
</dbReference>
<dbReference type="GO" id="GO:0005829">
    <property type="term" value="C:cytosol"/>
    <property type="evidence" value="ECO:0007669"/>
    <property type="project" value="TreeGrafter"/>
</dbReference>
<dbReference type="GO" id="GO:0008839">
    <property type="term" value="F:4-hydroxy-tetrahydrodipicolinate reductase"/>
    <property type="evidence" value="ECO:0007669"/>
    <property type="project" value="UniProtKB-EC"/>
</dbReference>
<dbReference type="GO" id="GO:0051287">
    <property type="term" value="F:NAD binding"/>
    <property type="evidence" value="ECO:0007669"/>
    <property type="project" value="UniProtKB-UniRule"/>
</dbReference>
<dbReference type="GO" id="GO:0050661">
    <property type="term" value="F:NADP binding"/>
    <property type="evidence" value="ECO:0007669"/>
    <property type="project" value="UniProtKB-UniRule"/>
</dbReference>
<dbReference type="GO" id="GO:0016726">
    <property type="term" value="F:oxidoreductase activity, acting on CH or CH2 groups, NAD or NADP as acceptor"/>
    <property type="evidence" value="ECO:0007669"/>
    <property type="project" value="UniProtKB-UniRule"/>
</dbReference>
<dbReference type="GO" id="GO:0019877">
    <property type="term" value="P:diaminopimelate biosynthetic process"/>
    <property type="evidence" value="ECO:0007669"/>
    <property type="project" value="UniProtKB-UniRule"/>
</dbReference>
<dbReference type="GO" id="GO:0009089">
    <property type="term" value="P:lysine biosynthetic process via diaminopimelate"/>
    <property type="evidence" value="ECO:0007669"/>
    <property type="project" value="UniProtKB-UniRule"/>
</dbReference>
<dbReference type="CDD" id="cd02274">
    <property type="entry name" value="DHDPR_N"/>
    <property type="match status" value="1"/>
</dbReference>
<dbReference type="FunFam" id="3.30.360.10:FF:000004">
    <property type="entry name" value="4-hydroxy-tetrahydrodipicolinate reductase"/>
    <property type="match status" value="1"/>
</dbReference>
<dbReference type="Gene3D" id="3.30.360.10">
    <property type="entry name" value="Dihydrodipicolinate Reductase, domain 2"/>
    <property type="match status" value="1"/>
</dbReference>
<dbReference type="Gene3D" id="3.40.50.720">
    <property type="entry name" value="NAD(P)-binding Rossmann-like Domain"/>
    <property type="match status" value="1"/>
</dbReference>
<dbReference type="HAMAP" id="MF_00102">
    <property type="entry name" value="DapB"/>
    <property type="match status" value="1"/>
</dbReference>
<dbReference type="InterPro" id="IPR022663">
    <property type="entry name" value="DapB_C"/>
</dbReference>
<dbReference type="InterPro" id="IPR000846">
    <property type="entry name" value="DapB_N"/>
</dbReference>
<dbReference type="InterPro" id="IPR022664">
    <property type="entry name" value="DapB_N_CS"/>
</dbReference>
<dbReference type="InterPro" id="IPR023940">
    <property type="entry name" value="DHDPR_bac"/>
</dbReference>
<dbReference type="InterPro" id="IPR036291">
    <property type="entry name" value="NAD(P)-bd_dom_sf"/>
</dbReference>
<dbReference type="NCBIfam" id="TIGR00036">
    <property type="entry name" value="dapB"/>
    <property type="match status" value="1"/>
</dbReference>
<dbReference type="PANTHER" id="PTHR20836:SF0">
    <property type="entry name" value="4-HYDROXY-TETRAHYDRODIPICOLINATE REDUCTASE 1, CHLOROPLASTIC-RELATED"/>
    <property type="match status" value="1"/>
</dbReference>
<dbReference type="PANTHER" id="PTHR20836">
    <property type="entry name" value="DIHYDRODIPICOLINATE REDUCTASE"/>
    <property type="match status" value="1"/>
</dbReference>
<dbReference type="Pfam" id="PF05173">
    <property type="entry name" value="DapB_C"/>
    <property type="match status" value="1"/>
</dbReference>
<dbReference type="Pfam" id="PF01113">
    <property type="entry name" value="DapB_N"/>
    <property type="match status" value="1"/>
</dbReference>
<dbReference type="PIRSF" id="PIRSF000161">
    <property type="entry name" value="DHPR"/>
    <property type="match status" value="1"/>
</dbReference>
<dbReference type="SUPFAM" id="SSF55347">
    <property type="entry name" value="Glyceraldehyde-3-phosphate dehydrogenase-like, C-terminal domain"/>
    <property type="match status" value="1"/>
</dbReference>
<dbReference type="SUPFAM" id="SSF51735">
    <property type="entry name" value="NAD(P)-binding Rossmann-fold domains"/>
    <property type="match status" value="1"/>
</dbReference>
<dbReference type="PROSITE" id="PS01298">
    <property type="entry name" value="DAPB"/>
    <property type="match status" value="1"/>
</dbReference>
<protein>
    <recommendedName>
        <fullName evidence="1">4-hydroxy-tetrahydrodipicolinate reductase</fullName>
        <shortName evidence="1">HTPA reductase</shortName>
        <ecNumber evidence="1">1.17.1.8</ecNumber>
    </recommendedName>
</protein>
<name>DAPB_SINFN</name>